<accession>Q4P2Q5</accession>
<accession>A0A0D1DVV5</accession>
<proteinExistence type="inferred from homology"/>
<feature type="chain" id="PRO_0000414296" description="U1 small nuclear ribonucleoprotein C">
    <location>
        <begin position="1"/>
        <end position="221"/>
    </location>
</feature>
<feature type="zinc finger region" description="Matrin-type" evidence="1">
    <location>
        <begin position="4"/>
        <end position="36"/>
    </location>
</feature>
<feature type="region of interest" description="Disordered" evidence="2">
    <location>
        <begin position="80"/>
        <end position="221"/>
    </location>
</feature>
<feature type="compositionally biased region" description="Pro residues" evidence="2">
    <location>
        <begin position="142"/>
        <end position="158"/>
    </location>
</feature>
<feature type="compositionally biased region" description="Low complexity" evidence="2">
    <location>
        <begin position="178"/>
        <end position="190"/>
    </location>
</feature>
<feature type="compositionally biased region" description="Pro residues" evidence="2">
    <location>
        <begin position="191"/>
        <end position="204"/>
    </location>
</feature>
<reference key="1">
    <citation type="journal article" date="2006" name="Nature">
        <title>Insights from the genome of the biotrophic fungal plant pathogen Ustilago maydis.</title>
        <authorList>
            <person name="Kaemper J."/>
            <person name="Kahmann R."/>
            <person name="Boelker M."/>
            <person name="Ma L.-J."/>
            <person name="Brefort T."/>
            <person name="Saville B.J."/>
            <person name="Banuett F."/>
            <person name="Kronstad J.W."/>
            <person name="Gold S.E."/>
            <person name="Mueller O."/>
            <person name="Perlin M.H."/>
            <person name="Woesten H.A.B."/>
            <person name="de Vries R."/>
            <person name="Ruiz-Herrera J."/>
            <person name="Reynaga-Pena C.G."/>
            <person name="Snetselaar K."/>
            <person name="McCann M."/>
            <person name="Perez-Martin J."/>
            <person name="Feldbruegge M."/>
            <person name="Basse C.W."/>
            <person name="Steinberg G."/>
            <person name="Ibeas J.I."/>
            <person name="Holloman W."/>
            <person name="Guzman P."/>
            <person name="Farman M.L."/>
            <person name="Stajich J.E."/>
            <person name="Sentandreu R."/>
            <person name="Gonzalez-Prieto J.M."/>
            <person name="Kennell J.C."/>
            <person name="Molina L."/>
            <person name="Schirawski J."/>
            <person name="Mendoza-Mendoza A."/>
            <person name="Greilinger D."/>
            <person name="Muench K."/>
            <person name="Roessel N."/>
            <person name="Scherer M."/>
            <person name="Vranes M."/>
            <person name="Ladendorf O."/>
            <person name="Vincon V."/>
            <person name="Fuchs U."/>
            <person name="Sandrock B."/>
            <person name="Meng S."/>
            <person name="Ho E.C.H."/>
            <person name="Cahill M.J."/>
            <person name="Boyce K.J."/>
            <person name="Klose J."/>
            <person name="Klosterman S.J."/>
            <person name="Deelstra H.J."/>
            <person name="Ortiz-Castellanos L."/>
            <person name="Li W."/>
            <person name="Sanchez-Alonso P."/>
            <person name="Schreier P.H."/>
            <person name="Haeuser-Hahn I."/>
            <person name="Vaupel M."/>
            <person name="Koopmann E."/>
            <person name="Friedrich G."/>
            <person name="Voss H."/>
            <person name="Schlueter T."/>
            <person name="Margolis J."/>
            <person name="Platt D."/>
            <person name="Swimmer C."/>
            <person name="Gnirke A."/>
            <person name="Chen F."/>
            <person name="Vysotskaia V."/>
            <person name="Mannhaupt G."/>
            <person name="Gueldener U."/>
            <person name="Muensterkoetter M."/>
            <person name="Haase D."/>
            <person name="Oesterheld M."/>
            <person name="Mewes H.-W."/>
            <person name="Mauceli E.W."/>
            <person name="DeCaprio D."/>
            <person name="Wade C.M."/>
            <person name="Butler J."/>
            <person name="Young S.K."/>
            <person name="Jaffe D.B."/>
            <person name="Calvo S.E."/>
            <person name="Nusbaum C."/>
            <person name="Galagan J.E."/>
            <person name="Birren B.W."/>
        </authorList>
    </citation>
    <scope>NUCLEOTIDE SEQUENCE [LARGE SCALE GENOMIC DNA]</scope>
    <source>
        <strain>DSM 14603 / FGSC 9021 / UM521</strain>
    </source>
</reference>
<reference key="2">
    <citation type="submission" date="2014-09" db="EMBL/GenBank/DDBJ databases">
        <authorList>
            <person name="Gueldener U."/>
            <person name="Muensterkoetter M."/>
            <person name="Walter M.C."/>
            <person name="Mannhaupt G."/>
            <person name="Kahmann R."/>
        </authorList>
    </citation>
    <scope>GENOME REANNOTATION</scope>
    <source>
        <strain>DSM 14603 / FGSC 9021 / UM521</strain>
    </source>
</reference>
<organism>
    <name type="scientific">Mycosarcoma maydis</name>
    <name type="common">Corn smut fungus</name>
    <name type="synonym">Ustilago maydis</name>
    <dbReference type="NCBI Taxonomy" id="5270"/>
    <lineage>
        <taxon>Eukaryota</taxon>
        <taxon>Fungi</taxon>
        <taxon>Dikarya</taxon>
        <taxon>Basidiomycota</taxon>
        <taxon>Ustilaginomycotina</taxon>
        <taxon>Ustilaginomycetes</taxon>
        <taxon>Ustilaginales</taxon>
        <taxon>Ustilaginaceae</taxon>
        <taxon>Mycosarcoma</taxon>
    </lineage>
</organism>
<name>RU1C_MYCMD</name>
<dbReference type="EMBL" id="CM003157">
    <property type="protein sequence ID" value="KIS66620.1"/>
    <property type="molecule type" value="Genomic_DNA"/>
</dbReference>
<dbReference type="RefSeq" id="XP_011391907.1">
    <property type="nucleotide sequence ID" value="XM_011393605.1"/>
</dbReference>
<dbReference type="SMR" id="Q4P2Q5"/>
<dbReference type="STRING" id="237631.Q4P2Q5"/>
<dbReference type="EnsemblFungi" id="KIS66620">
    <property type="protein sequence ID" value="KIS66620"/>
    <property type="gene ID" value="UMAG_05608"/>
</dbReference>
<dbReference type="GeneID" id="23565456"/>
<dbReference type="KEGG" id="uma:UMAG_05608"/>
<dbReference type="VEuPathDB" id="FungiDB:UMAG_05608"/>
<dbReference type="eggNOG" id="KOG3454">
    <property type="taxonomic scope" value="Eukaryota"/>
</dbReference>
<dbReference type="HOGENOM" id="CLU_079697_1_0_1"/>
<dbReference type="InParanoid" id="Q4P2Q5"/>
<dbReference type="OMA" id="GWKFREN"/>
<dbReference type="OrthoDB" id="76567at2759"/>
<dbReference type="Proteomes" id="UP000000561">
    <property type="component" value="Chromosome 18"/>
</dbReference>
<dbReference type="GO" id="GO:0000243">
    <property type="term" value="C:commitment complex"/>
    <property type="evidence" value="ECO:0007669"/>
    <property type="project" value="UniProtKB-UniRule"/>
</dbReference>
<dbReference type="GO" id="GO:0005685">
    <property type="term" value="C:U1 snRNP"/>
    <property type="evidence" value="ECO:0000318"/>
    <property type="project" value="GO_Central"/>
</dbReference>
<dbReference type="GO" id="GO:0071004">
    <property type="term" value="C:U2-type prespliceosome"/>
    <property type="evidence" value="ECO:0007669"/>
    <property type="project" value="UniProtKB-UniRule"/>
</dbReference>
<dbReference type="GO" id="GO:0003729">
    <property type="term" value="F:mRNA binding"/>
    <property type="evidence" value="ECO:0007669"/>
    <property type="project" value="UniProtKB-UniRule"/>
</dbReference>
<dbReference type="GO" id="GO:0030627">
    <property type="term" value="F:pre-mRNA 5'-splice site binding"/>
    <property type="evidence" value="ECO:0000318"/>
    <property type="project" value="GO_Central"/>
</dbReference>
<dbReference type="GO" id="GO:0030619">
    <property type="term" value="F:U1 snRNA binding"/>
    <property type="evidence" value="ECO:0007669"/>
    <property type="project" value="UniProtKB-UniRule"/>
</dbReference>
<dbReference type="GO" id="GO:0008270">
    <property type="term" value="F:zinc ion binding"/>
    <property type="evidence" value="ECO:0007669"/>
    <property type="project" value="UniProtKB-UniRule"/>
</dbReference>
<dbReference type="GO" id="GO:0000395">
    <property type="term" value="P:mRNA 5'-splice site recognition"/>
    <property type="evidence" value="ECO:0000318"/>
    <property type="project" value="GO_Central"/>
</dbReference>
<dbReference type="GO" id="GO:0000387">
    <property type="term" value="P:spliceosomal snRNP assembly"/>
    <property type="evidence" value="ECO:0007669"/>
    <property type="project" value="UniProtKB-UniRule"/>
</dbReference>
<dbReference type="FunFam" id="3.30.160.60:FF:000059">
    <property type="entry name" value="U1 small nuclear ribonucleoprotein C"/>
    <property type="match status" value="1"/>
</dbReference>
<dbReference type="Gene3D" id="3.30.160.60">
    <property type="entry name" value="Classic Zinc Finger"/>
    <property type="match status" value="1"/>
</dbReference>
<dbReference type="HAMAP" id="MF_03153">
    <property type="entry name" value="U1_C"/>
    <property type="match status" value="1"/>
</dbReference>
<dbReference type="InterPro" id="IPR000690">
    <property type="entry name" value="Matrin/U1-C_Znf_C2H2"/>
</dbReference>
<dbReference type="InterPro" id="IPR003604">
    <property type="entry name" value="Matrin/U1-like-C_Znf_C2H2"/>
</dbReference>
<dbReference type="InterPro" id="IPR013085">
    <property type="entry name" value="U1-CZ_Znf_C2H2"/>
</dbReference>
<dbReference type="InterPro" id="IPR017340">
    <property type="entry name" value="U1_snRNP-C"/>
</dbReference>
<dbReference type="InterPro" id="IPR036236">
    <property type="entry name" value="Znf_C2H2_sf"/>
</dbReference>
<dbReference type="PANTHER" id="PTHR31148">
    <property type="entry name" value="U1 SMALL NUCLEAR RIBONUCLEOPROTEIN C"/>
    <property type="match status" value="1"/>
</dbReference>
<dbReference type="PANTHER" id="PTHR31148:SF1">
    <property type="entry name" value="U1 SMALL NUCLEAR RIBONUCLEOPROTEIN C"/>
    <property type="match status" value="1"/>
</dbReference>
<dbReference type="Pfam" id="PF06220">
    <property type="entry name" value="zf-U1"/>
    <property type="match status" value="1"/>
</dbReference>
<dbReference type="PIRSF" id="PIRSF037969">
    <property type="entry name" value="U1_snRNP-C"/>
    <property type="match status" value="1"/>
</dbReference>
<dbReference type="SMART" id="SM00451">
    <property type="entry name" value="ZnF_U1"/>
    <property type="match status" value="1"/>
</dbReference>
<dbReference type="SUPFAM" id="SSF57667">
    <property type="entry name" value="beta-beta-alpha zinc fingers"/>
    <property type="match status" value="1"/>
</dbReference>
<dbReference type="PROSITE" id="PS50171">
    <property type="entry name" value="ZF_MATRIN"/>
    <property type="match status" value="1"/>
</dbReference>
<evidence type="ECO:0000255" key="1">
    <source>
        <dbReference type="HAMAP-Rule" id="MF_03153"/>
    </source>
</evidence>
<evidence type="ECO:0000256" key="2">
    <source>
        <dbReference type="SAM" id="MobiDB-lite"/>
    </source>
</evidence>
<gene>
    <name type="ORF">UMAG_05608</name>
</gene>
<comment type="function">
    <text evidence="1">Component of the spliceosomal U1 snRNP, which is essential for recognition of the pre-mRNA 5' splice-site and the subsequent assembly of the spliceosome. U1-C is directly involved in initial 5' splice-site recognition for both constitutive and regulated alternative splicing. The interaction with the 5' splice-site seems to precede base-pairing between the pre-mRNA and the U1 snRNA. Stimulates commitment or early (E) complex formation by stabilizing the base pairing of the 5' end of the U1 snRNA and the 5' splice-site region.</text>
</comment>
<comment type="subunit">
    <text evidence="1">U1 snRNP is composed of the 7 core Sm proteins B/B', D1, D2, D3, E, F and G that assemble in a heptameric protein ring on the Sm site of the small nuclear RNA to form the core snRNP, and at least 3 U1 snRNP-specific proteins U1-70K, U1-A and U1-C. U1-C interacts with U1 snRNA and the 5' splice-site region of the pre-mRNA.</text>
</comment>
<comment type="subcellular location">
    <subcellularLocation>
        <location evidence="1">Nucleus</location>
    </subcellularLocation>
</comment>
<comment type="similarity">
    <text evidence="1">Belongs to the U1 small nuclear ribonucleoprotein C family.</text>
</comment>
<protein>
    <recommendedName>
        <fullName evidence="1">U1 small nuclear ribonucleoprotein C</fullName>
        <shortName evidence="1">U1 snRNP C</shortName>
        <shortName evidence="1">U1-C</shortName>
        <shortName evidence="1">U1C</shortName>
    </recommendedName>
</protein>
<keyword id="KW-0479">Metal-binding</keyword>
<keyword id="KW-0539">Nucleus</keyword>
<keyword id="KW-1185">Reference proteome</keyword>
<keyword id="KW-0687">Ribonucleoprotein</keyword>
<keyword id="KW-0694">RNA-binding</keyword>
<keyword id="KW-0862">Zinc</keyword>
<keyword id="KW-0863">Zinc-finger</keyword>
<sequence length="221" mass="23345">MGKHYCDYCDVFLTHDSVSVRKAHNSGRNHLQNVREYYQTLEPECIQQVLDTLAQEYDLRGIEKPRDLLQPAGSSFMTFGAGPLSGSSDRAFRSQVPPSRMSMGGGVGGGSDRRGDSRGGSGGYGRYGNNDGSRDQGAPPNYSRPPPQGGPYSRPPPDMMAGGPPGISNGPYPPRGPPLGYGAPLPGAYPSGPPPNMRGPPPPLASNGSHAPHSRTGYGPR</sequence>